<sequence>MIINAKGPASFAEKYIVRSIWENKFPPGSILPAERELSELIGVTRTTLREVLQRLARDGWLKIQHGKPTRVNNFWETSGLNILETIADLNPEGFPVLVDQLLSARTNVSAIYFRGALRNSPDTAVEVLAQIHQLEDTAESFAEYDYLLHHTLAFSSGNPLYVLILNGFKGLYSRVGRYYFSSPEARQLALNFYKELEVLAKAKNYVDVPALMRTYGINSGKMWLQLRDDMPTSIALQEANS</sequence>
<protein>
    <recommendedName>
        <fullName evidence="1">Fatty acid metabolism regulator protein</fullName>
    </recommendedName>
</protein>
<feature type="chain" id="PRO_0000301512" description="Fatty acid metabolism regulator protein">
    <location>
        <begin position="1"/>
        <end position="241"/>
    </location>
</feature>
<feature type="domain" description="HTH gntR-type" evidence="1">
    <location>
        <begin position="6"/>
        <end position="74"/>
    </location>
</feature>
<feature type="DNA-binding region" description="H-T-H motif" evidence="1">
    <location>
        <begin position="34"/>
        <end position="53"/>
    </location>
</feature>
<gene>
    <name evidence="1" type="primary">fadR</name>
    <name type="ordered locus">Shewmr4_1568</name>
</gene>
<organism>
    <name type="scientific">Shewanella sp. (strain MR-4)</name>
    <dbReference type="NCBI Taxonomy" id="60480"/>
    <lineage>
        <taxon>Bacteria</taxon>
        <taxon>Pseudomonadati</taxon>
        <taxon>Pseudomonadota</taxon>
        <taxon>Gammaproteobacteria</taxon>
        <taxon>Alteromonadales</taxon>
        <taxon>Shewanellaceae</taxon>
        <taxon>Shewanella</taxon>
    </lineage>
</organism>
<reference key="1">
    <citation type="submission" date="2006-08" db="EMBL/GenBank/DDBJ databases">
        <title>Complete sequence of Shewanella sp. MR-4.</title>
        <authorList>
            <consortium name="US DOE Joint Genome Institute"/>
            <person name="Copeland A."/>
            <person name="Lucas S."/>
            <person name="Lapidus A."/>
            <person name="Barry K."/>
            <person name="Detter J.C."/>
            <person name="Glavina del Rio T."/>
            <person name="Hammon N."/>
            <person name="Israni S."/>
            <person name="Dalin E."/>
            <person name="Tice H."/>
            <person name="Pitluck S."/>
            <person name="Kiss H."/>
            <person name="Brettin T."/>
            <person name="Bruce D."/>
            <person name="Han C."/>
            <person name="Tapia R."/>
            <person name="Gilna P."/>
            <person name="Schmutz J."/>
            <person name="Larimer F."/>
            <person name="Land M."/>
            <person name="Hauser L."/>
            <person name="Kyrpides N."/>
            <person name="Mikhailova N."/>
            <person name="Nealson K."/>
            <person name="Konstantinidis K."/>
            <person name="Klappenbach J."/>
            <person name="Tiedje J."/>
            <person name="Richardson P."/>
        </authorList>
    </citation>
    <scope>NUCLEOTIDE SEQUENCE [LARGE SCALE GENOMIC DNA]</scope>
    <source>
        <strain>MR-4</strain>
    </source>
</reference>
<accession>Q0HJX1</accession>
<keyword id="KW-0010">Activator</keyword>
<keyword id="KW-0963">Cytoplasm</keyword>
<keyword id="KW-0238">DNA-binding</keyword>
<keyword id="KW-0276">Fatty acid metabolism</keyword>
<keyword id="KW-0443">Lipid metabolism</keyword>
<keyword id="KW-0678">Repressor</keyword>
<keyword id="KW-0804">Transcription</keyword>
<keyword id="KW-0805">Transcription regulation</keyword>
<dbReference type="EMBL" id="CP000446">
    <property type="protein sequence ID" value="ABI38646.1"/>
    <property type="molecule type" value="Genomic_DNA"/>
</dbReference>
<dbReference type="RefSeq" id="WP_011622349.1">
    <property type="nucleotide sequence ID" value="NC_008321.1"/>
</dbReference>
<dbReference type="SMR" id="Q0HJX1"/>
<dbReference type="KEGG" id="she:Shewmr4_1568"/>
<dbReference type="HOGENOM" id="CLU_017584_9_4_6"/>
<dbReference type="GO" id="GO:0005737">
    <property type="term" value="C:cytoplasm"/>
    <property type="evidence" value="ECO:0007669"/>
    <property type="project" value="UniProtKB-SubCell"/>
</dbReference>
<dbReference type="GO" id="GO:0003677">
    <property type="term" value="F:DNA binding"/>
    <property type="evidence" value="ECO:0007669"/>
    <property type="project" value="UniProtKB-KW"/>
</dbReference>
<dbReference type="GO" id="GO:0003700">
    <property type="term" value="F:DNA-binding transcription factor activity"/>
    <property type="evidence" value="ECO:0007669"/>
    <property type="project" value="UniProtKB-UniRule"/>
</dbReference>
<dbReference type="GO" id="GO:0000062">
    <property type="term" value="F:fatty-acyl-CoA binding"/>
    <property type="evidence" value="ECO:0007669"/>
    <property type="project" value="InterPro"/>
</dbReference>
<dbReference type="GO" id="GO:0006631">
    <property type="term" value="P:fatty acid metabolic process"/>
    <property type="evidence" value="ECO:0007669"/>
    <property type="project" value="UniProtKB-KW"/>
</dbReference>
<dbReference type="GO" id="GO:0019217">
    <property type="term" value="P:regulation of fatty acid metabolic process"/>
    <property type="evidence" value="ECO:0007669"/>
    <property type="project" value="UniProtKB-UniRule"/>
</dbReference>
<dbReference type="CDD" id="cd07377">
    <property type="entry name" value="WHTH_GntR"/>
    <property type="match status" value="1"/>
</dbReference>
<dbReference type="Gene3D" id="1.20.120.530">
    <property type="entry name" value="GntR ligand-binding domain-like"/>
    <property type="match status" value="1"/>
</dbReference>
<dbReference type="Gene3D" id="1.10.10.10">
    <property type="entry name" value="Winged helix-like DNA-binding domain superfamily/Winged helix DNA-binding domain"/>
    <property type="match status" value="1"/>
</dbReference>
<dbReference type="HAMAP" id="MF_00696">
    <property type="entry name" value="HTH_FadR"/>
    <property type="match status" value="1"/>
</dbReference>
<dbReference type="InterPro" id="IPR014178">
    <property type="entry name" value="FA-response_TF_FadR"/>
</dbReference>
<dbReference type="InterPro" id="IPR028374">
    <property type="entry name" value="FadR_C"/>
</dbReference>
<dbReference type="InterPro" id="IPR008920">
    <property type="entry name" value="TF_FadR/GntR_C"/>
</dbReference>
<dbReference type="InterPro" id="IPR000524">
    <property type="entry name" value="Tscrpt_reg_HTH_GntR"/>
</dbReference>
<dbReference type="InterPro" id="IPR036388">
    <property type="entry name" value="WH-like_DNA-bd_sf"/>
</dbReference>
<dbReference type="InterPro" id="IPR036390">
    <property type="entry name" value="WH_DNA-bd_sf"/>
</dbReference>
<dbReference type="NCBIfam" id="TIGR02812">
    <property type="entry name" value="fadR_gamma"/>
    <property type="match status" value="1"/>
</dbReference>
<dbReference type="NCBIfam" id="NF003444">
    <property type="entry name" value="PRK04984.1"/>
    <property type="match status" value="1"/>
</dbReference>
<dbReference type="PANTHER" id="PTHR43537:SF52">
    <property type="entry name" value="FATTY ACID METABOLISM REGULATOR PROTEIN"/>
    <property type="match status" value="1"/>
</dbReference>
<dbReference type="PANTHER" id="PTHR43537">
    <property type="entry name" value="TRANSCRIPTIONAL REGULATOR, GNTR FAMILY"/>
    <property type="match status" value="1"/>
</dbReference>
<dbReference type="Pfam" id="PF07840">
    <property type="entry name" value="FadR_C"/>
    <property type="match status" value="1"/>
</dbReference>
<dbReference type="Pfam" id="PF00392">
    <property type="entry name" value="GntR"/>
    <property type="match status" value="1"/>
</dbReference>
<dbReference type="PRINTS" id="PR00035">
    <property type="entry name" value="HTHGNTR"/>
</dbReference>
<dbReference type="SMART" id="SM00345">
    <property type="entry name" value="HTH_GNTR"/>
    <property type="match status" value="1"/>
</dbReference>
<dbReference type="SUPFAM" id="SSF48008">
    <property type="entry name" value="GntR ligand-binding domain-like"/>
    <property type="match status" value="1"/>
</dbReference>
<dbReference type="SUPFAM" id="SSF46785">
    <property type="entry name" value="Winged helix' DNA-binding domain"/>
    <property type="match status" value="1"/>
</dbReference>
<dbReference type="PROSITE" id="PS50949">
    <property type="entry name" value="HTH_GNTR"/>
    <property type="match status" value="1"/>
</dbReference>
<comment type="function">
    <text evidence="1">Multifunctional regulator of fatty acid metabolism.</text>
</comment>
<comment type="subunit">
    <text evidence="1">Homodimer.</text>
</comment>
<comment type="subcellular location">
    <subcellularLocation>
        <location evidence="1">Cytoplasm</location>
    </subcellularLocation>
</comment>
<proteinExistence type="inferred from homology"/>
<evidence type="ECO:0000255" key="1">
    <source>
        <dbReference type="HAMAP-Rule" id="MF_00696"/>
    </source>
</evidence>
<name>FADR_SHESM</name>